<protein>
    <recommendedName>
        <fullName>Uncharacterized HTH-type transcriptional regulator Rv0474</fullName>
    </recommendedName>
</protein>
<reference key="1">
    <citation type="journal article" date="1998" name="Nature">
        <title>Deciphering the biology of Mycobacterium tuberculosis from the complete genome sequence.</title>
        <authorList>
            <person name="Cole S.T."/>
            <person name="Brosch R."/>
            <person name="Parkhill J."/>
            <person name="Garnier T."/>
            <person name="Churcher C.M."/>
            <person name="Harris D.E."/>
            <person name="Gordon S.V."/>
            <person name="Eiglmeier K."/>
            <person name="Gas S."/>
            <person name="Barry C.E. III"/>
            <person name="Tekaia F."/>
            <person name="Badcock K."/>
            <person name="Basham D."/>
            <person name="Brown D."/>
            <person name="Chillingworth T."/>
            <person name="Connor R."/>
            <person name="Davies R.M."/>
            <person name="Devlin K."/>
            <person name="Feltwell T."/>
            <person name="Gentles S."/>
            <person name="Hamlin N."/>
            <person name="Holroyd S."/>
            <person name="Hornsby T."/>
            <person name="Jagels K."/>
            <person name="Krogh A."/>
            <person name="McLean J."/>
            <person name="Moule S."/>
            <person name="Murphy L.D."/>
            <person name="Oliver S."/>
            <person name="Osborne J."/>
            <person name="Quail M.A."/>
            <person name="Rajandream M.A."/>
            <person name="Rogers J."/>
            <person name="Rutter S."/>
            <person name="Seeger K."/>
            <person name="Skelton S."/>
            <person name="Squares S."/>
            <person name="Squares R."/>
            <person name="Sulston J.E."/>
            <person name="Taylor K."/>
            <person name="Whitehead S."/>
            <person name="Barrell B.G."/>
        </authorList>
    </citation>
    <scope>NUCLEOTIDE SEQUENCE [LARGE SCALE GENOMIC DNA]</scope>
    <source>
        <strain>ATCC 25618 / H37Rv</strain>
    </source>
</reference>
<reference key="2">
    <citation type="journal article" date="2008" name="BMC Syst. Biol.">
        <title>targetTB: a target identification pipeline for Mycobacterium tuberculosis through an interactome, reactome and genome-scale structural analysis.</title>
        <authorList>
            <person name="Raman K."/>
            <person name="Yeturu K."/>
            <person name="Chandra N."/>
        </authorList>
    </citation>
    <scope>IDENTIFICATION AS A DRUG TARGET [LARGE SCALE ANALYSIS]</scope>
</reference>
<reference key="3">
    <citation type="journal article" date="2011" name="Mol. Cell. Proteomics">
        <title>Proteogenomic analysis of Mycobacterium tuberculosis by high resolution mass spectrometry.</title>
        <authorList>
            <person name="Kelkar D.S."/>
            <person name="Kumar D."/>
            <person name="Kumar P."/>
            <person name="Balakrishnan L."/>
            <person name="Muthusamy B."/>
            <person name="Yadav A.K."/>
            <person name="Shrivastava P."/>
            <person name="Marimuthu A."/>
            <person name="Anand S."/>
            <person name="Sundaram H."/>
            <person name="Kingsbury R."/>
            <person name="Harsha H.C."/>
            <person name="Nair B."/>
            <person name="Prasad T.S."/>
            <person name="Chauhan D.S."/>
            <person name="Katoch K."/>
            <person name="Katoch V.M."/>
            <person name="Kumar P."/>
            <person name="Chaerkady R."/>
            <person name="Ramachandran S."/>
            <person name="Dash D."/>
            <person name="Pandey A."/>
        </authorList>
    </citation>
    <scope>IDENTIFICATION BY MASS SPECTROMETRY [LARGE SCALE ANALYSIS]</scope>
    <source>
        <strain>ATCC 25618 / H37Rv</strain>
    </source>
</reference>
<comment type="miscellaneous">
    <text>Was identified as a high-confidence drug target.</text>
</comment>
<accession>P9WMH9</accession>
<accession>L0T6K7</accession>
<accession>O53759</accession>
<accession>Q7D9R1</accession>
<gene>
    <name type="ordered locus">Rv0474</name>
</gene>
<proteinExistence type="evidence at protein level"/>
<sequence>MSSEEKLAAKVSTKASDVASDIGSFIRSQRETAHVSMRQLAERSGVSNPYLSQVERGLRKPSADVLSQIAKALRVSAEVLYVRAGILEPSETSQVRDAIITDTAITERQKQILLDIYASFTHQNEATREECPSDPTPTDD</sequence>
<keyword id="KW-0238">DNA-binding</keyword>
<keyword id="KW-1185">Reference proteome</keyword>
<keyword id="KW-0804">Transcription</keyword>
<keyword id="KW-0805">Transcription regulation</keyword>
<organism>
    <name type="scientific">Mycobacterium tuberculosis (strain ATCC 25618 / H37Rv)</name>
    <dbReference type="NCBI Taxonomy" id="83332"/>
    <lineage>
        <taxon>Bacteria</taxon>
        <taxon>Bacillati</taxon>
        <taxon>Actinomycetota</taxon>
        <taxon>Actinomycetes</taxon>
        <taxon>Mycobacteriales</taxon>
        <taxon>Mycobacteriaceae</taxon>
        <taxon>Mycobacterium</taxon>
        <taxon>Mycobacterium tuberculosis complex</taxon>
    </lineage>
</organism>
<dbReference type="EMBL" id="AL123456">
    <property type="protein sequence ID" value="CCP43208.1"/>
    <property type="molecule type" value="Genomic_DNA"/>
</dbReference>
<dbReference type="PIR" id="F70829">
    <property type="entry name" value="F70829"/>
</dbReference>
<dbReference type="RefSeq" id="NP_214988.1">
    <property type="nucleotide sequence ID" value="NC_000962.3"/>
</dbReference>
<dbReference type="RefSeq" id="WP_003402335.1">
    <property type="nucleotide sequence ID" value="NZ_NVQJ01000002.1"/>
</dbReference>
<dbReference type="SMR" id="P9WMH9"/>
<dbReference type="FunCoup" id="P9WMH9">
    <property type="interactions" value="1"/>
</dbReference>
<dbReference type="STRING" id="83332.Rv0474"/>
<dbReference type="PaxDb" id="83332-Rv0474"/>
<dbReference type="DNASU" id="886276"/>
<dbReference type="GeneID" id="886276"/>
<dbReference type="KEGG" id="mtu:Rv0474"/>
<dbReference type="KEGG" id="mtv:RVBD_0474"/>
<dbReference type="TubercuList" id="Rv0474"/>
<dbReference type="eggNOG" id="COG1396">
    <property type="taxonomic scope" value="Bacteria"/>
</dbReference>
<dbReference type="InParanoid" id="P9WMH9"/>
<dbReference type="OrthoDB" id="70105at2"/>
<dbReference type="PhylomeDB" id="P9WMH9"/>
<dbReference type="Proteomes" id="UP000001584">
    <property type="component" value="Chromosome"/>
</dbReference>
<dbReference type="GO" id="GO:0005829">
    <property type="term" value="C:cytosol"/>
    <property type="evidence" value="ECO:0007005"/>
    <property type="project" value="MTBBASE"/>
</dbReference>
<dbReference type="GO" id="GO:0009274">
    <property type="term" value="C:peptidoglycan-based cell wall"/>
    <property type="evidence" value="ECO:0007005"/>
    <property type="project" value="MTBBASE"/>
</dbReference>
<dbReference type="GO" id="GO:0003677">
    <property type="term" value="F:DNA binding"/>
    <property type="evidence" value="ECO:0007669"/>
    <property type="project" value="UniProtKB-KW"/>
</dbReference>
<dbReference type="GO" id="GO:0003700">
    <property type="term" value="F:DNA-binding transcription factor activity"/>
    <property type="evidence" value="ECO:0000318"/>
    <property type="project" value="GO_Central"/>
</dbReference>
<dbReference type="GO" id="GO:0006355">
    <property type="term" value="P:regulation of DNA-templated transcription"/>
    <property type="evidence" value="ECO:0000318"/>
    <property type="project" value="GO_Central"/>
</dbReference>
<dbReference type="CDD" id="cd00093">
    <property type="entry name" value="HTH_XRE"/>
    <property type="match status" value="1"/>
</dbReference>
<dbReference type="FunFam" id="1.10.260.40:FF:000032">
    <property type="entry name" value="Transcriptional regulator ClgR"/>
    <property type="match status" value="1"/>
</dbReference>
<dbReference type="Gene3D" id="1.10.260.40">
    <property type="entry name" value="lambda repressor-like DNA-binding domains"/>
    <property type="match status" value="1"/>
</dbReference>
<dbReference type="InterPro" id="IPR050807">
    <property type="entry name" value="Bact_TransReg_Diox"/>
</dbReference>
<dbReference type="InterPro" id="IPR001387">
    <property type="entry name" value="Cro/C1-type_HTH"/>
</dbReference>
<dbReference type="InterPro" id="IPR010982">
    <property type="entry name" value="Lambda_DNA-bd_dom_sf"/>
</dbReference>
<dbReference type="PANTHER" id="PTHR46797">
    <property type="entry name" value="HTH-TYPE TRANSCRIPTIONAL REGULATOR"/>
    <property type="match status" value="1"/>
</dbReference>
<dbReference type="PANTHER" id="PTHR46797:SF1">
    <property type="entry name" value="METHYLPHOSPHONATE SYNTHASE"/>
    <property type="match status" value="1"/>
</dbReference>
<dbReference type="Pfam" id="PF01381">
    <property type="entry name" value="HTH_3"/>
    <property type="match status" value="1"/>
</dbReference>
<dbReference type="SMART" id="SM00530">
    <property type="entry name" value="HTH_XRE"/>
    <property type="match status" value="1"/>
</dbReference>
<dbReference type="SUPFAM" id="SSF47413">
    <property type="entry name" value="lambda repressor-like DNA-binding domains"/>
    <property type="match status" value="1"/>
</dbReference>
<dbReference type="PROSITE" id="PS50943">
    <property type="entry name" value="HTH_CROC1"/>
    <property type="match status" value="1"/>
</dbReference>
<name>Y474_MYCTU</name>
<feature type="chain" id="PRO_0000382635" description="Uncharacterized HTH-type transcriptional regulator Rv0474">
    <location>
        <begin position="1"/>
        <end position="140"/>
    </location>
</feature>
<feature type="domain" description="HTH cro/C1-type" evidence="1">
    <location>
        <begin position="26"/>
        <end position="80"/>
    </location>
</feature>
<feature type="DNA-binding region" description="H-T-H motif" evidence="1">
    <location>
        <begin position="37"/>
        <end position="56"/>
    </location>
</feature>
<evidence type="ECO:0000255" key="1">
    <source>
        <dbReference type="PROSITE-ProRule" id="PRU00257"/>
    </source>
</evidence>